<dbReference type="EMBL" id="CP000312">
    <property type="protein sequence ID" value="ABG87704.1"/>
    <property type="molecule type" value="Genomic_DNA"/>
</dbReference>
<dbReference type="RefSeq" id="WP_011591653.1">
    <property type="nucleotide sequence ID" value="NC_008262.1"/>
</dbReference>
<dbReference type="SMR" id="Q0SVG3"/>
<dbReference type="KEGG" id="cpr:CPR_0560"/>
<dbReference type="Proteomes" id="UP000001824">
    <property type="component" value="Chromosome"/>
</dbReference>
<dbReference type="GO" id="GO:0003677">
    <property type="term" value="F:DNA binding"/>
    <property type="evidence" value="ECO:0007669"/>
    <property type="project" value="InterPro"/>
</dbReference>
<dbReference type="CDD" id="cd22359">
    <property type="entry name" value="SfsA-like_bacterial"/>
    <property type="match status" value="1"/>
</dbReference>
<dbReference type="FunFam" id="2.40.50.580:FF:000002">
    <property type="entry name" value="Sugar fermentation stimulation protein homolog"/>
    <property type="match status" value="1"/>
</dbReference>
<dbReference type="Gene3D" id="2.40.50.580">
    <property type="match status" value="1"/>
</dbReference>
<dbReference type="Gene3D" id="3.40.1350.60">
    <property type="match status" value="1"/>
</dbReference>
<dbReference type="HAMAP" id="MF_00095">
    <property type="entry name" value="SfsA"/>
    <property type="match status" value="1"/>
</dbReference>
<dbReference type="InterPro" id="IPR005224">
    <property type="entry name" value="SfsA"/>
</dbReference>
<dbReference type="InterPro" id="IPR040452">
    <property type="entry name" value="SfsA_C"/>
</dbReference>
<dbReference type="InterPro" id="IPR041465">
    <property type="entry name" value="SfsA_N"/>
</dbReference>
<dbReference type="NCBIfam" id="TIGR00230">
    <property type="entry name" value="sfsA"/>
    <property type="match status" value="1"/>
</dbReference>
<dbReference type="PANTHER" id="PTHR30545">
    <property type="entry name" value="SUGAR FERMENTATION STIMULATION PROTEIN A"/>
    <property type="match status" value="1"/>
</dbReference>
<dbReference type="PANTHER" id="PTHR30545:SF2">
    <property type="entry name" value="SUGAR FERMENTATION STIMULATION PROTEIN A"/>
    <property type="match status" value="1"/>
</dbReference>
<dbReference type="Pfam" id="PF03749">
    <property type="entry name" value="SfsA"/>
    <property type="match status" value="1"/>
</dbReference>
<dbReference type="Pfam" id="PF17746">
    <property type="entry name" value="SfsA_N"/>
    <property type="match status" value="1"/>
</dbReference>
<name>SFSA_CLOPS</name>
<feature type="chain" id="PRO_1000007978" description="Sugar fermentation stimulation protein homolog">
    <location>
        <begin position="1"/>
        <end position="230"/>
    </location>
</feature>
<accession>Q0SVG3</accession>
<comment type="similarity">
    <text evidence="1">Belongs to the SfsA family.</text>
</comment>
<reference key="1">
    <citation type="journal article" date="2006" name="Genome Res.">
        <title>Skewed genomic variability in strains of the toxigenic bacterial pathogen, Clostridium perfringens.</title>
        <authorList>
            <person name="Myers G.S.A."/>
            <person name="Rasko D.A."/>
            <person name="Cheung J.K."/>
            <person name="Ravel J."/>
            <person name="Seshadri R."/>
            <person name="DeBoy R.T."/>
            <person name="Ren Q."/>
            <person name="Varga J."/>
            <person name="Awad M.M."/>
            <person name="Brinkac L.M."/>
            <person name="Daugherty S.C."/>
            <person name="Haft D.H."/>
            <person name="Dodson R.J."/>
            <person name="Madupu R."/>
            <person name="Nelson W.C."/>
            <person name="Rosovitz M.J."/>
            <person name="Sullivan S.A."/>
            <person name="Khouri H."/>
            <person name="Dimitrov G.I."/>
            <person name="Watkins K.L."/>
            <person name="Mulligan S."/>
            <person name="Benton J."/>
            <person name="Radune D."/>
            <person name="Fisher D.J."/>
            <person name="Atkins H.S."/>
            <person name="Hiscox T."/>
            <person name="Jost B.H."/>
            <person name="Billington S.J."/>
            <person name="Songer J.G."/>
            <person name="McClane B.A."/>
            <person name="Titball R.W."/>
            <person name="Rood J.I."/>
            <person name="Melville S.B."/>
            <person name="Paulsen I.T."/>
        </authorList>
    </citation>
    <scope>NUCLEOTIDE SEQUENCE [LARGE SCALE GENOMIC DNA]</scope>
    <source>
        <strain>SM101 / Type A</strain>
    </source>
</reference>
<organism>
    <name type="scientific">Clostridium perfringens (strain SM101 / Type A)</name>
    <dbReference type="NCBI Taxonomy" id="289380"/>
    <lineage>
        <taxon>Bacteria</taxon>
        <taxon>Bacillati</taxon>
        <taxon>Bacillota</taxon>
        <taxon>Clostridia</taxon>
        <taxon>Eubacteriales</taxon>
        <taxon>Clostridiaceae</taxon>
        <taxon>Clostridium</taxon>
    </lineage>
</organism>
<sequence length="230" mass="26398">MKYNSVIRKAIFLRRPNRFQAYVVLDDEELLVHVPNTGRCREILKEGCTVLLRKGTTPNRKTPYDLIAAYKGEILINIDSQIPNKVVEEALINKKIEKLVNFNNISREKTFGNSRFDFKLQDDNENIYFLEVKGVTLEENGETRFPDAPTERGKKHILELIEIKKLGMGAGIIFLIQIDNVNKFSPNDETDPKFGEALRLAKKEGVDIFAYNCKVTEEEIELLNPVEIVL</sequence>
<proteinExistence type="inferred from homology"/>
<evidence type="ECO:0000255" key="1">
    <source>
        <dbReference type="HAMAP-Rule" id="MF_00095"/>
    </source>
</evidence>
<protein>
    <recommendedName>
        <fullName evidence="1">Sugar fermentation stimulation protein homolog</fullName>
    </recommendedName>
</protein>
<gene>
    <name evidence="1" type="primary">sfsA</name>
    <name type="ordered locus">CPR_0560</name>
</gene>